<name>PLP1_CAEEL</name>
<reference evidence="6" key="1">
    <citation type="journal article" date="1998" name="Science">
        <title>Genome sequence of the nematode C. elegans: a platform for investigating biology.</title>
        <authorList>
            <consortium name="The C. elegans sequencing consortium"/>
        </authorList>
    </citation>
    <scope>NUCLEOTIDE SEQUENCE [LARGE SCALE GENOMIC DNA]</scope>
    <source>
        <strain evidence="6">Bristol N2</strain>
    </source>
</reference>
<reference evidence="5" key="2">
    <citation type="journal article" date="2005" name="Mol. Cells">
        <title>PLP-1 binds nematode double-stranded telomeric DNA.</title>
        <authorList>
            <person name="Im S.H."/>
            <person name="Lee J."/>
        </authorList>
    </citation>
    <scope>FUNCTION</scope>
    <scope>SUBCELLULAR LOCATION</scope>
    <scope>IDENTIFICATION BY MASS SPECTROMETRY</scope>
</reference>
<reference evidence="5" key="3">
    <citation type="journal article" date="2009" name="Dev. Biol.">
        <title>C. elegans pur alpha, an activator of end-1, synergizes with the Wnt pathway to specify endoderm.</title>
        <authorList>
            <person name="Witze E.S."/>
            <person name="Field E.D."/>
            <person name="Hunt D.F."/>
            <person name="Rothman J.H."/>
        </authorList>
    </citation>
    <scope>FUNCTION</scope>
    <scope>IDENTIFICATION BY MASS SPECTROMETRY</scope>
    <scope>SUBCELLULAR LOCATION</scope>
    <scope>DEVELOPMENTAL STAGE</scope>
    <scope>DISRUPTION PHENOTYPE</scope>
</reference>
<reference evidence="5" key="4">
    <citation type="journal article" date="2014" name="Am. J. Hum. Genet.">
        <title>Mutations in PURA cause profound neonatal hypotonia, seizures, and encephalopathy in 5q31.3 microdeletion syndrome.</title>
        <authorList>
            <person name="Lalani S.R."/>
            <person name="Zhang J."/>
            <person name="Schaaf C.P."/>
            <person name="Brown C.W."/>
            <person name="Magoulas P."/>
            <person name="Tsai A.C."/>
            <person name="El-Gharbawy A."/>
            <person name="Wierenga K.J."/>
            <person name="Bartholomew D."/>
            <person name="Fong C.T."/>
            <person name="Barbaro-Dieber T."/>
            <person name="Kukolich M.K."/>
            <person name="Burrage L.C."/>
            <person name="Austin E."/>
            <person name="Keller K."/>
            <person name="Pastore M."/>
            <person name="Fernandez F."/>
            <person name="Lotze T."/>
            <person name="Wilfong A."/>
            <person name="Purcarin G."/>
            <person name="Zhu W."/>
            <person name="Craigen W.J."/>
            <person name="McGuire M."/>
            <person name="Jain M."/>
            <person name="Cooney E."/>
            <person name="Azamian M."/>
            <person name="Bainbridge M.N."/>
            <person name="Muzny D.M."/>
            <person name="Boerwinkle E."/>
            <person name="Person R.E."/>
            <person name="Niu Z."/>
            <person name="Eng C.M."/>
            <person name="Lupski J.R."/>
            <person name="Gibbs R.A."/>
            <person name="Beaudet A.L."/>
            <person name="Yang Y."/>
            <person name="Wang M.C."/>
            <person name="Xia F."/>
        </authorList>
    </citation>
    <scope>DISRUPTION PHENOTYPE</scope>
</reference>
<proteinExistence type="evidence at protein level"/>
<organism evidence="6">
    <name type="scientific">Caenorhabditis elegans</name>
    <dbReference type="NCBI Taxonomy" id="6239"/>
    <lineage>
        <taxon>Eukaryota</taxon>
        <taxon>Metazoa</taxon>
        <taxon>Ecdysozoa</taxon>
        <taxon>Nematoda</taxon>
        <taxon>Chromadorea</taxon>
        <taxon>Rhabditida</taxon>
        <taxon>Rhabditina</taxon>
        <taxon>Rhabditomorpha</taxon>
        <taxon>Rhabditoidea</taxon>
        <taxon>Rhabditidae</taxon>
        <taxon>Peloderinae</taxon>
        <taxon>Caenorhabditis</taxon>
    </lineage>
</organism>
<evidence type="ECO:0000269" key="1">
    <source>
    </source>
</evidence>
<evidence type="ECO:0000269" key="2">
    <source>
    </source>
</evidence>
<evidence type="ECO:0000269" key="3">
    <source>
    </source>
</evidence>
<evidence type="ECO:0000303" key="4">
    <source>
    </source>
</evidence>
<evidence type="ECO:0000305" key="5"/>
<evidence type="ECO:0000312" key="6">
    <source>
        <dbReference type="Proteomes" id="UP000001940"/>
    </source>
</evidence>
<evidence type="ECO:0000312" key="7">
    <source>
        <dbReference type="WormBase" id="F45E4.2"/>
    </source>
</evidence>
<protein>
    <recommendedName>
        <fullName evidence="5">Transcriptional activator plp-1</fullName>
    </recommendedName>
    <alternativeName>
        <fullName evidence="4">Pur-alpha-like protein 1</fullName>
    </alternativeName>
</protein>
<dbReference type="EMBL" id="BX284604">
    <property type="protein sequence ID" value="CCD63777.1"/>
    <property type="molecule type" value="Genomic_DNA"/>
</dbReference>
<dbReference type="PIR" id="T25756">
    <property type="entry name" value="T25756"/>
</dbReference>
<dbReference type="RefSeq" id="NP_501241.1">
    <property type="nucleotide sequence ID" value="NM_068840.8"/>
</dbReference>
<dbReference type="SMR" id="Q94230"/>
<dbReference type="FunCoup" id="Q94230">
    <property type="interactions" value="2760"/>
</dbReference>
<dbReference type="IntAct" id="Q94230">
    <property type="interactions" value="2"/>
</dbReference>
<dbReference type="STRING" id="6239.F45E4.2.1"/>
<dbReference type="PaxDb" id="6239-F45E4.2"/>
<dbReference type="PeptideAtlas" id="Q94230"/>
<dbReference type="EnsemblMetazoa" id="F45E4.2.1">
    <property type="protein sequence ID" value="F45E4.2.1"/>
    <property type="gene ID" value="WBGene00004046"/>
</dbReference>
<dbReference type="GeneID" id="177540"/>
<dbReference type="KEGG" id="cel:CELE_F45E4.2"/>
<dbReference type="UCSC" id="F45E4.2.1">
    <property type="organism name" value="c. elegans"/>
</dbReference>
<dbReference type="AGR" id="WB:WBGene00004046"/>
<dbReference type="CTD" id="177540"/>
<dbReference type="WormBase" id="F45E4.2">
    <property type="protein sequence ID" value="CE10494"/>
    <property type="gene ID" value="WBGene00004046"/>
    <property type="gene designation" value="plp-1"/>
</dbReference>
<dbReference type="eggNOG" id="KOG3074">
    <property type="taxonomic scope" value="Eukaryota"/>
</dbReference>
<dbReference type="GeneTree" id="ENSGT00950000183162"/>
<dbReference type="HOGENOM" id="CLU_057873_1_1_1"/>
<dbReference type="InParanoid" id="Q94230"/>
<dbReference type="OMA" id="WAKFGST"/>
<dbReference type="OrthoDB" id="523901at2759"/>
<dbReference type="PhylomeDB" id="Q94230"/>
<dbReference type="PRO" id="PR:Q94230"/>
<dbReference type="Proteomes" id="UP000001940">
    <property type="component" value="Chromosome IV"/>
</dbReference>
<dbReference type="Bgee" id="WBGene00004046">
    <property type="expression patterns" value="Expressed in germ line (C elegans) and 4 other cell types or tissues"/>
</dbReference>
<dbReference type="GO" id="GO:0005694">
    <property type="term" value="C:chromosome"/>
    <property type="evidence" value="ECO:0007669"/>
    <property type="project" value="UniProtKB-SubCell"/>
</dbReference>
<dbReference type="GO" id="GO:0005634">
    <property type="term" value="C:nucleus"/>
    <property type="evidence" value="ECO:0000314"/>
    <property type="project" value="WormBase"/>
</dbReference>
<dbReference type="GO" id="GO:0043186">
    <property type="term" value="C:P granule"/>
    <property type="evidence" value="ECO:0000314"/>
    <property type="project" value="WormBase"/>
</dbReference>
<dbReference type="GO" id="GO:0000981">
    <property type="term" value="F:DNA-binding transcription factor activity, RNA polymerase II-specific"/>
    <property type="evidence" value="ECO:0000318"/>
    <property type="project" value="GO_Central"/>
</dbReference>
<dbReference type="GO" id="GO:0003690">
    <property type="term" value="F:double-stranded DNA binding"/>
    <property type="evidence" value="ECO:0000314"/>
    <property type="project" value="WormBase"/>
</dbReference>
<dbReference type="GO" id="GO:0003691">
    <property type="term" value="F:double-stranded telomeric DNA binding"/>
    <property type="evidence" value="ECO:0000314"/>
    <property type="project" value="WormBase"/>
</dbReference>
<dbReference type="GO" id="GO:0032422">
    <property type="term" value="F:purine-rich negative regulatory element binding"/>
    <property type="evidence" value="ECO:0000318"/>
    <property type="project" value="GO_Central"/>
</dbReference>
<dbReference type="GO" id="GO:0000977">
    <property type="term" value="F:RNA polymerase II transcription regulatory region sequence-specific DNA binding"/>
    <property type="evidence" value="ECO:0000318"/>
    <property type="project" value="GO_Central"/>
</dbReference>
<dbReference type="GO" id="GO:0043565">
    <property type="term" value="F:sequence-specific DNA binding"/>
    <property type="evidence" value="ECO:0000314"/>
    <property type="project" value="WormBase"/>
</dbReference>
<dbReference type="GO" id="GO:0007281">
    <property type="term" value="P:germ cell development"/>
    <property type="evidence" value="ECO:0000315"/>
    <property type="project" value="WormBase"/>
</dbReference>
<dbReference type="GO" id="GO:0040012">
    <property type="term" value="P:regulation of locomotion"/>
    <property type="evidence" value="ECO:0000315"/>
    <property type="project" value="WormBase"/>
</dbReference>
<dbReference type="GO" id="GO:0006357">
    <property type="term" value="P:regulation of transcription by RNA polymerase II"/>
    <property type="evidence" value="ECO:0000318"/>
    <property type="project" value="GO_Central"/>
</dbReference>
<dbReference type="FunFam" id="3.30.2450.30:FF:000003">
    <property type="entry name" value="Histone acetyltransferase"/>
    <property type="match status" value="1"/>
</dbReference>
<dbReference type="Gene3D" id="3.10.450.700">
    <property type="match status" value="1"/>
</dbReference>
<dbReference type="Gene3D" id="3.30.2450.30">
    <property type="match status" value="1"/>
</dbReference>
<dbReference type="InterPro" id="IPR006628">
    <property type="entry name" value="PUR-bd_fam"/>
</dbReference>
<dbReference type="PANTHER" id="PTHR12611">
    <property type="entry name" value="PUR-TRANSCRIPTIONAL ACTIVATOR"/>
    <property type="match status" value="1"/>
</dbReference>
<dbReference type="PANTHER" id="PTHR12611:SF0">
    <property type="entry name" value="PURINE-RICH BINDING PROTEIN-ALPHA, ISOFORM B"/>
    <property type="match status" value="1"/>
</dbReference>
<dbReference type="Pfam" id="PF04845">
    <property type="entry name" value="PurA"/>
    <property type="match status" value="1"/>
</dbReference>
<dbReference type="SMART" id="SM00712">
    <property type="entry name" value="PUR"/>
    <property type="match status" value="3"/>
</dbReference>
<sequence>MSDGSVERGTKRAEDSLATHQLTVQYKRYYIDVNENTRGRYIKIAELGTNYKSRIILSIVAAKAIVSEISKMLALIDEPSTGEHAPKESSLIKSETLNVDGRKFYVDLKENVRGRFLRIAQMPMNPRQTRQQIAIPSDGIAEIHKVLTEYLAKFGEGHEQENTNTPKITAENKSFLFHSGKNDRGEFVRISEIKLNSGYRNAITVPMSALVDFRKELDNIIANQGK</sequence>
<accession>Q94230</accession>
<keyword id="KW-0010">Activator</keyword>
<keyword id="KW-0158">Chromosome</keyword>
<keyword id="KW-0238">DNA-binding</keyword>
<keyword id="KW-0539">Nucleus</keyword>
<keyword id="KW-1185">Reference proteome</keyword>
<keyword id="KW-0804">Transcription</keyword>
<keyword id="KW-0805">Transcription regulation</keyword>
<comment type="function">
    <text evidence="1 2">Probable transcription activator (PubMed:19084000). Binds telomeric DNA containing repeats of the sequence, 5'-TTAGGC-3' (PubMed:16267406). Binds to end-1 promoter, activating end-1 expression, which is required for endoderm specification during embryonic development (PubMed:19084000).</text>
</comment>
<comment type="subcellular location">
    <subcellularLocation>
        <location evidence="2">Nucleus</location>
    </subcellularLocation>
    <subcellularLocation>
        <location evidence="1 2">Chromosome</location>
    </subcellularLocation>
    <text evidence="2">localizes to nuclei of interphase cells throughout early embryogenesis. Localizes to the nucleus in a lit-1 dependent manner. Transiently asymmetrically localizes during telophase of the dividing EMS cell with higher levels in the future E cell nucleus and low or undetectable levels in that of the MS cell.</text>
</comment>
<comment type="developmental stage">
    <text evidence="2">First expressed in blastomeres at the two cell stage of embryogenesis (PubMed:19084000). Also expressed in germline-specific P granules of early embryos (PubMed:19084000).</text>
</comment>
<comment type="disruption phenotype">
    <text evidence="2 3">Sterile due to lack of oocytes (PubMed:25439098). Defective locomotion, marked by a 3-fold reduction in speed (PubMed:25439098). RNAi-mediated knockdown causes embryonic lethality (PubMed:19084000). RNAi-mediated knockdown substantially reduces expression of end-1 (PubMed:19084000). RNAi-mediated knockdown abolishes formation of endoderm in 3% of embryos and in 35% of embryos on a mom-5 mutant background (PubMed:19084000).</text>
</comment>
<comment type="similarity">
    <text evidence="5">Belongs to the PUR DNA-binding protein family.</text>
</comment>
<feature type="chain" id="PRO_0000451293" description="Transcriptional activator plp-1">
    <location>
        <begin position="1"/>
        <end position="226"/>
    </location>
</feature>
<gene>
    <name evidence="4 7" type="primary">plp-1</name>
    <name evidence="7" type="ORF">F45E4.2</name>
</gene>